<protein>
    <recommendedName>
        <fullName evidence="1">Phosphoribosyl-ATP pyrophosphatase</fullName>
        <shortName evidence="1">PRA-PH</shortName>
        <ecNumber evidence="1">3.6.1.31</ecNumber>
    </recommendedName>
</protein>
<gene>
    <name evidence="1" type="primary">hisE</name>
    <name type="ordered locus">Igni_0029</name>
</gene>
<dbReference type="EC" id="3.6.1.31" evidence="1"/>
<dbReference type="EMBL" id="CP000816">
    <property type="protein sequence ID" value="ABU81213.1"/>
    <property type="molecule type" value="Genomic_DNA"/>
</dbReference>
<dbReference type="RefSeq" id="WP_011998065.1">
    <property type="nucleotide sequence ID" value="NC_009776.1"/>
</dbReference>
<dbReference type="SMR" id="A8A8G1"/>
<dbReference type="STRING" id="453591.Igni_0029"/>
<dbReference type="GeneID" id="5562976"/>
<dbReference type="KEGG" id="iho:Igni_0029"/>
<dbReference type="eggNOG" id="arCOG02677">
    <property type="taxonomic scope" value="Archaea"/>
</dbReference>
<dbReference type="HOGENOM" id="CLU_123337_0_0_2"/>
<dbReference type="OrthoDB" id="39686at2157"/>
<dbReference type="PhylomeDB" id="A8A8G1"/>
<dbReference type="UniPathway" id="UPA00031">
    <property type="reaction ID" value="UER00007"/>
</dbReference>
<dbReference type="Proteomes" id="UP000000262">
    <property type="component" value="Chromosome"/>
</dbReference>
<dbReference type="GO" id="GO:0005737">
    <property type="term" value="C:cytoplasm"/>
    <property type="evidence" value="ECO:0007669"/>
    <property type="project" value="UniProtKB-SubCell"/>
</dbReference>
<dbReference type="GO" id="GO:0005524">
    <property type="term" value="F:ATP binding"/>
    <property type="evidence" value="ECO:0007669"/>
    <property type="project" value="UniProtKB-KW"/>
</dbReference>
<dbReference type="GO" id="GO:0004636">
    <property type="term" value="F:phosphoribosyl-ATP diphosphatase activity"/>
    <property type="evidence" value="ECO:0007669"/>
    <property type="project" value="UniProtKB-UniRule"/>
</dbReference>
<dbReference type="GO" id="GO:0000105">
    <property type="term" value="P:L-histidine biosynthetic process"/>
    <property type="evidence" value="ECO:0007669"/>
    <property type="project" value="UniProtKB-UniRule"/>
</dbReference>
<dbReference type="CDD" id="cd11534">
    <property type="entry name" value="NTP-PPase_HisIE_like"/>
    <property type="match status" value="1"/>
</dbReference>
<dbReference type="Gene3D" id="1.10.287.1080">
    <property type="entry name" value="MazG-like"/>
    <property type="match status" value="1"/>
</dbReference>
<dbReference type="HAMAP" id="MF_01020">
    <property type="entry name" value="HisE"/>
    <property type="match status" value="1"/>
</dbReference>
<dbReference type="InterPro" id="IPR008179">
    <property type="entry name" value="HisE"/>
</dbReference>
<dbReference type="InterPro" id="IPR021130">
    <property type="entry name" value="PRib-ATP_PPHydrolase-like"/>
</dbReference>
<dbReference type="NCBIfam" id="TIGR03188">
    <property type="entry name" value="histidine_hisI"/>
    <property type="match status" value="1"/>
</dbReference>
<dbReference type="PANTHER" id="PTHR42945">
    <property type="entry name" value="HISTIDINE BIOSYNTHESIS BIFUNCTIONAL PROTEIN"/>
    <property type="match status" value="1"/>
</dbReference>
<dbReference type="PANTHER" id="PTHR42945:SF1">
    <property type="entry name" value="HISTIDINE BIOSYNTHESIS BIFUNCTIONAL PROTEIN HIS7"/>
    <property type="match status" value="1"/>
</dbReference>
<dbReference type="Pfam" id="PF01503">
    <property type="entry name" value="PRA-PH"/>
    <property type="match status" value="1"/>
</dbReference>
<dbReference type="SUPFAM" id="SSF101386">
    <property type="entry name" value="all-alpha NTP pyrophosphatases"/>
    <property type="match status" value="1"/>
</dbReference>
<feature type="chain" id="PRO_0000319671" description="Phosphoribosyl-ATP pyrophosphatase">
    <location>
        <begin position="1"/>
        <end position="102"/>
    </location>
</feature>
<proteinExistence type="inferred from homology"/>
<accession>A8A8G1</accession>
<sequence>MSDFLSELWLVIKKRIEEKPQGSYTAEIVKRGLPFAARKFGEESVELIVASLSEPRDSVIYEAADVIYHLMVLLALRGVDWAEVIKELERRSRAKSGAGGNS</sequence>
<evidence type="ECO:0000255" key="1">
    <source>
        <dbReference type="HAMAP-Rule" id="MF_01020"/>
    </source>
</evidence>
<reference key="1">
    <citation type="journal article" date="2008" name="Genome Biol.">
        <title>A genomic analysis of the archaeal system Ignicoccus hospitalis-Nanoarchaeum equitans.</title>
        <authorList>
            <person name="Podar M."/>
            <person name="Anderson I."/>
            <person name="Makarova K.S."/>
            <person name="Elkins J.G."/>
            <person name="Ivanova N."/>
            <person name="Wall M.A."/>
            <person name="Lykidis A."/>
            <person name="Mavromatis K."/>
            <person name="Sun H."/>
            <person name="Hudson M.E."/>
            <person name="Chen W."/>
            <person name="Deciu C."/>
            <person name="Hutchison D."/>
            <person name="Eads J.R."/>
            <person name="Anderson A."/>
            <person name="Fernandes F."/>
            <person name="Szeto E."/>
            <person name="Lapidus A."/>
            <person name="Kyrpides N.C."/>
            <person name="Saier M.H. Jr."/>
            <person name="Richardson P.M."/>
            <person name="Rachel R."/>
            <person name="Huber H."/>
            <person name="Eisen J.A."/>
            <person name="Koonin E.V."/>
            <person name="Keller M."/>
            <person name="Stetter K.O."/>
        </authorList>
    </citation>
    <scope>NUCLEOTIDE SEQUENCE [LARGE SCALE GENOMIC DNA]</scope>
    <source>
        <strain>KIN4/I / DSM 18386 / JCM 14125</strain>
    </source>
</reference>
<comment type="catalytic activity">
    <reaction evidence="1">
        <text>1-(5-phospho-beta-D-ribosyl)-ATP + H2O = 1-(5-phospho-beta-D-ribosyl)-5'-AMP + diphosphate + H(+)</text>
        <dbReference type="Rhea" id="RHEA:22828"/>
        <dbReference type="ChEBI" id="CHEBI:15377"/>
        <dbReference type="ChEBI" id="CHEBI:15378"/>
        <dbReference type="ChEBI" id="CHEBI:33019"/>
        <dbReference type="ChEBI" id="CHEBI:59457"/>
        <dbReference type="ChEBI" id="CHEBI:73183"/>
        <dbReference type="EC" id="3.6.1.31"/>
    </reaction>
</comment>
<comment type="pathway">
    <text evidence="1">Amino-acid biosynthesis; L-histidine biosynthesis; L-histidine from 5-phospho-alpha-D-ribose 1-diphosphate: step 2/9.</text>
</comment>
<comment type="subcellular location">
    <subcellularLocation>
        <location evidence="1">Cytoplasm</location>
    </subcellularLocation>
</comment>
<comment type="similarity">
    <text evidence="1">Belongs to the PRA-PH family.</text>
</comment>
<name>HIS2_IGNH4</name>
<organism>
    <name type="scientific">Ignicoccus hospitalis (strain KIN4/I / DSM 18386 / JCM 14125)</name>
    <dbReference type="NCBI Taxonomy" id="453591"/>
    <lineage>
        <taxon>Archaea</taxon>
        <taxon>Thermoproteota</taxon>
        <taxon>Thermoprotei</taxon>
        <taxon>Desulfurococcales</taxon>
        <taxon>Desulfurococcaceae</taxon>
        <taxon>Ignicoccus</taxon>
    </lineage>
</organism>
<keyword id="KW-0028">Amino-acid biosynthesis</keyword>
<keyword id="KW-0067">ATP-binding</keyword>
<keyword id="KW-0963">Cytoplasm</keyword>
<keyword id="KW-0368">Histidine biosynthesis</keyword>
<keyword id="KW-0378">Hydrolase</keyword>
<keyword id="KW-0547">Nucleotide-binding</keyword>
<keyword id="KW-1185">Reference proteome</keyword>